<sequence>MNITDVRVRKIAKEGKMRAVVSITIDDEFVVHDIKVIEGEKGLFIAMPSRKSSDGEYRDIAHPINTQTRDKLQKIVLEAYEKAEYVEE</sequence>
<gene>
    <name evidence="1" type="primary">spoVG</name>
    <name type="ordered locus">EUBELI_01916</name>
</gene>
<feature type="chain" id="PRO_1000213098" description="Putative septation protein SpoVG">
    <location>
        <begin position="1"/>
        <end position="88"/>
    </location>
</feature>
<dbReference type="EMBL" id="CP001104">
    <property type="protein sequence ID" value="ACR72905.1"/>
    <property type="molecule type" value="Genomic_DNA"/>
</dbReference>
<dbReference type="RefSeq" id="WP_012740137.1">
    <property type="nucleotide sequence ID" value="NC_012778.1"/>
</dbReference>
<dbReference type="SMR" id="C4Z4L6"/>
<dbReference type="STRING" id="515620.EUBELI_01916"/>
<dbReference type="GeneID" id="41356563"/>
<dbReference type="KEGG" id="eel:EUBELI_01916"/>
<dbReference type="eggNOG" id="COG2088">
    <property type="taxonomic scope" value="Bacteria"/>
</dbReference>
<dbReference type="HOGENOM" id="CLU_103669_2_1_9"/>
<dbReference type="Proteomes" id="UP000001476">
    <property type="component" value="Chromosome"/>
</dbReference>
<dbReference type="GO" id="GO:0000917">
    <property type="term" value="P:division septum assembly"/>
    <property type="evidence" value="ECO:0007669"/>
    <property type="project" value="UniProtKB-KW"/>
</dbReference>
<dbReference type="GO" id="GO:0030435">
    <property type="term" value="P:sporulation resulting in formation of a cellular spore"/>
    <property type="evidence" value="ECO:0007669"/>
    <property type="project" value="InterPro"/>
</dbReference>
<dbReference type="Gene3D" id="3.30.1120.40">
    <property type="entry name" value="Stage V sporulation protein G"/>
    <property type="match status" value="1"/>
</dbReference>
<dbReference type="HAMAP" id="MF_00819">
    <property type="entry name" value="SpoVG"/>
    <property type="match status" value="1"/>
</dbReference>
<dbReference type="InterPro" id="IPR007170">
    <property type="entry name" value="SpoVG"/>
</dbReference>
<dbReference type="InterPro" id="IPR036751">
    <property type="entry name" value="SpoVG_sf"/>
</dbReference>
<dbReference type="NCBIfam" id="NF009749">
    <property type="entry name" value="PRK13259.1"/>
    <property type="match status" value="1"/>
</dbReference>
<dbReference type="PANTHER" id="PTHR38429">
    <property type="entry name" value="SEPTATION PROTEIN SPOVG-RELATED"/>
    <property type="match status" value="1"/>
</dbReference>
<dbReference type="PANTHER" id="PTHR38429:SF1">
    <property type="entry name" value="SEPTATION PROTEIN SPOVG-RELATED"/>
    <property type="match status" value="1"/>
</dbReference>
<dbReference type="Pfam" id="PF04026">
    <property type="entry name" value="SpoVG"/>
    <property type="match status" value="1"/>
</dbReference>
<dbReference type="SUPFAM" id="SSF160537">
    <property type="entry name" value="SpoVG-like"/>
    <property type="match status" value="1"/>
</dbReference>
<accession>C4Z4L6</accession>
<protein>
    <recommendedName>
        <fullName evidence="1">Putative septation protein SpoVG</fullName>
    </recommendedName>
</protein>
<comment type="function">
    <text evidence="1">Could be involved in septation.</text>
</comment>
<comment type="similarity">
    <text evidence="1">Belongs to the SpoVG family.</text>
</comment>
<keyword id="KW-0131">Cell cycle</keyword>
<keyword id="KW-0132">Cell division</keyword>
<keyword id="KW-1185">Reference proteome</keyword>
<keyword id="KW-0717">Septation</keyword>
<evidence type="ECO:0000255" key="1">
    <source>
        <dbReference type="HAMAP-Rule" id="MF_00819"/>
    </source>
</evidence>
<proteinExistence type="inferred from homology"/>
<organism>
    <name type="scientific">Lachnospira eligens (strain ATCC 27750 / DSM 3376 / VPI C15-48 / C15-B4)</name>
    <name type="common">Eubacterium eligens</name>
    <dbReference type="NCBI Taxonomy" id="515620"/>
    <lineage>
        <taxon>Bacteria</taxon>
        <taxon>Bacillati</taxon>
        <taxon>Bacillota</taxon>
        <taxon>Clostridia</taxon>
        <taxon>Lachnospirales</taxon>
        <taxon>Lachnospiraceae</taxon>
        <taxon>Lachnospira</taxon>
    </lineage>
</organism>
<reference key="1">
    <citation type="journal article" date="2009" name="Proc. Natl. Acad. Sci. U.S.A.">
        <title>Characterizing a model human gut microbiota composed of members of its two dominant bacterial phyla.</title>
        <authorList>
            <person name="Mahowald M.A."/>
            <person name="Rey F.E."/>
            <person name="Seedorf H."/>
            <person name="Turnbaugh P.J."/>
            <person name="Fulton R.S."/>
            <person name="Wollam A."/>
            <person name="Shah N."/>
            <person name="Wang C."/>
            <person name="Magrini V."/>
            <person name="Wilson R.K."/>
            <person name="Cantarel B.L."/>
            <person name="Coutinho P.M."/>
            <person name="Henrissat B."/>
            <person name="Crock L.W."/>
            <person name="Russell A."/>
            <person name="Verberkmoes N.C."/>
            <person name="Hettich R.L."/>
            <person name="Gordon J.I."/>
        </authorList>
    </citation>
    <scope>NUCLEOTIDE SEQUENCE [LARGE SCALE GENOMIC DNA]</scope>
    <source>
        <strain>ATCC 27750 / DSM 3376 / VPI C15-48 / C15-B4</strain>
    </source>
</reference>
<name>SP5G_LACE2</name>